<reference key="1">
    <citation type="journal article" date="1990" name="Biochemistry">
        <title>Cloning and expression of the luxY gene from Vibrio fischeri strain Y-1 in Escherichia coli and complete amino acid sequence of the yellow fluorescent protein.</title>
        <authorList>
            <person name="Baldwin T.O."/>
            <person name="Treat M.L."/>
            <person name="Daubner S.C."/>
        </authorList>
    </citation>
    <scope>NUCLEOTIDE SEQUENCE [GENOMIC DNA]</scope>
    <scope>PROTEIN SEQUENCE OF 1-15</scope>
    <source>
        <strain>ATCC 33715 / Y-1</strain>
    </source>
</reference>
<reference key="2">
    <citation type="journal article" date="1987" name="Proc. Natl. Acad. Sci. U.S.A.">
        <title>Yellow light emission of Vibrio fischeri strain Y-1: purification and characterization of the energy-accepting yellow fluorescent protein.</title>
        <authorList>
            <person name="Daubner S.C."/>
            <person name="Astorga A.M."/>
            <person name="Leisman G.B."/>
            <person name="Baldwin T.O."/>
        </authorList>
    </citation>
    <scope>PROTEIN SEQUENCE OF 1-15</scope>
    <scope>SUBUNIT</scope>
    <source>
        <strain>ATCC 33715 / Y-1</strain>
    </source>
</reference>
<gene>
    <name type="primary">luxY</name>
</gene>
<dbReference type="EMBL" id="M60852">
    <property type="protein sequence ID" value="AAA27544.1"/>
    <property type="molecule type" value="Genomic_DNA"/>
</dbReference>
<dbReference type="PIR" id="A36037">
    <property type="entry name" value="A36037"/>
</dbReference>
<dbReference type="PDB" id="8E4C">
    <property type="method" value="EM"/>
    <property type="resolution" value="4.00 A"/>
    <property type="chains" value="C=1-194"/>
</dbReference>
<dbReference type="PDB" id="8EMA">
    <property type="method" value="EM"/>
    <property type="resolution" value="8.20 A"/>
    <property type="chains" value="C=1-194"/>
</dbReference>
<dbReference type="PDBsum" id="8E4C"/>
<dbReference type="PDBsum" id="8EMA"/>
<dbReference type="EMDB" id="EMD-27888"/>
<dbReference type="SMR" id="P21578"/>
<dbReference type="GO" id="GO:0004746">
    <property type="term" value="F:riboflavin synthase activity"/>
    <property type="evidence" value="ECO:0007669"/>
    <property type="project" value="TreeGrafter"/>
</dbReference>
<dbReference type="GO" id="GO:0008218">
    <property type="term" value="P:bioluminescence"/>
    <property type="evidence" value="ECO:0000314"/>
    <property type="project" value="CACAO"/>
</dbReference>
<dbReference type="GO" id="GO:0009231">
    <property type="term" value="P:riboflavin biosynthetic process"/>
    <property type="evidence" value="ECO:0007669"/>
    <property type="project" value="TreeGrafter"/>
</dbReference>
<dbReference type="CDD" id="cd16256">
    <property type="entry name" value="LumP"/>
    <property type="match status" value="1"/>
</dbReference>
<dbReference type="Gene3D" id="2.40.30.20">
    <property type="match status" value="2"/>
</dbReference>
<dbReference type="InterPro" id="IPR023366">
    <property type="entry name" value="ATP_synth_asu-like_sf"/>
</dbReference>
<dbReference type="InterPro" id="IPR001783">
    <property type="entry name" value="Lumazine-bd"/>
</dbReference>
<dbReference type="InterPro" id="IPR026017">
    <property type="entry name" value="Lumazine-bd_dom"/>
</dbReference>
<dbReference type="InterPro" id="IPR017938">
    <property type="entry name" value="Riboflavin_synthase-like_b-brl"/>
</dbReference>
<dbReference type="PANTHER" id="PTHR21098:SF0">
    <property type="entry name" value="RIBOFLAVIN SYNTHASE"/>
    <property type="match status" value="1"/>
</dbReference>
<dbReference type="PANTHER" id="PTHR21098">
    <property type="entry name" value="RIBOFLAVIN SYNTHASE ALPHA CHAIN"/>
    <property type="match status" value="1"/>
</dbReference>
<dbReference type="Pfam" id="PF00677">
    <property type="entry name" value="Lum_binding"/>
    <property type="match status" value="2"/>
</dbReference>
<dbReference type="PIRSF" id="PIRSF000498">
    <property type="entry name" value="Riboflavin_syn_A"/>
    <property type="match status" value="1"/>
</dbReference>
<dbReference type="SUPFAM" id="SSF63380">
    <property type="entry name" value="Riboflavin synthase domain-like"/>
    <property type="match status" value="2"/>
</dbReference>
<dbReference type="PROSITE" id="PS51177">
    <property type="entry name" value="LUMAZINE_BIND"/>
    <property type="match status" value="2"/>
</dbReference>
<keyword id="KW-0002">3D-structure</keyword>
<keyword id="KW-0903">Direct protein sequencing</keyword>
<keyword id="KW-0285">Flavoprotein</keyword>
<keyword id="KW-0288">FMN</keyword>
<keyword id="KW-0455">Luminescence</keyword>
<keyword id="KW-0677">Repeat</keyword>
<comment type="function">
    <text>Antenna protein that modulates the color of the bioluminescence emission of the luciferase. In the presence of YFP and only at temperatures below 20 degrees Celsius, luciferase exhibits a bimodal emission spectrum with a new peak at 545 nM (yellow), in addition to the one at 485 nM.</text>
</comment>
<comment type="cofactor">
    <cofactor>
        <name>FMN</name>
        <dbReference type="ChEBI" id="CHEBI:58210"/>
    </cofactor>
    <text>Binds 1 FMN non-covalently.</text>
</comment>
<comment type="subunit">
    <text evidence="1">Homodimer.</text>
</comment>
<evidence type="ECO:0000269" key="1">
    <source>
    </source>
</evidence>
<evidence type="ECO:0000305" key="2"/>
<proteinExistence type="evidence at protein level"/>
<sequence>MFKGIVEGIGIIEKIDIYTDLDKYAIRFPENMLNGIKKESSIMFNGCFLTVTSVNSNIVWFDIFEKEARKLDTFREYKVGDRVNLGTFPKFGAASGGHILSARISCVASIIEIIENEDYQQMWIQIPENFTEFLIDKDYIAVDGISLTIDTIKNNQFFISLPLKIAQNTNMKWRKKGDKVNVELSNKINANQCW</sequence>
<organism>
    <name type="scientific">Aliivibrio fischeri</name>
    <name type="common">Vibrio fischeri</name>
    <dbReference type="NCBI Taxonomy" id="668"/>
    <lineage>
        <taxon>Bacteria</taxon>
        <taxon>Pseudomonadati</taxon>
        <taxon>Pseudomonadota</taxon>
        <taxon>Gammaproteobacteria</taxon>
        <taxon>Vibrionales</taxon>
        <taxon>Vibrionaceae</taxon>
        <taxon>Aliivibrio</taxon>
    </lineage>
</organism>
<accession>P21578</accession>
<protein>
    <recommendedName>
        <fullName>Yellow fluorescent protein</fullName>
        <shortName>YFP</shortName>
    </recommendedName>
</protein>
<feature type="chain" id="PRO_0000068152" description="Yellow fluorescent protein">
    <location>
        <begin position="1"/>
        <end position="194"/>
    </location>
</feature>
<feature type="repeat" description="Lumazine-binding 1">
    <location>
        <begin position="1"/>
        <end position="98"/>
    </location>
</feature>
<feature type="repeat" description="Lumazine-binding 2">
    <location>
        <begin position="99"/>
        <end position="194"/>
    </location>
</feature>
<feature type="binding site" evidence="2">
    <location>
        <begin position="179"/>
        <end position="183"/>
    </location>
    <ligand>
        <name>FMN</name>
        <dbReference type="ChEBI" id="CHEBI:58210"/>
    </ligand>
</feature>
<name>LUXY_ALIFS</name>